<feature type="chain" id="PRO_0000428113" description="Probable peptidyl-prolyl cis-trans isomerase B">
    <location>
        <begin position="1"/>
        <end position="308"/>
    </location>
</feature>
<feature type="domain" description="PPIase cyclophilin-type" evidence="2">
    <location>
        <begin position="139"/>
        <end position="307"/>
    </location>
</feature>
<feature type="region of interest" description="Disordered" evidence="3">
    <location>
        <begin position="74"/>
        <end position="123"/>
    </location>
</feature>
<feature type="compositionally biased region" description="Low complexity" evidence="3">
    <location>
        <begin position="77"/>
        <end position="97"/>
    </location>
</feature>
<accession>P9WHW0</accession>
<accession>L0TCU5</accession>
<accession>Q50639</accession>
<protein>
    <recommendedName>
        <fullName>Probable peptidyl-prolyl cis-trans isomerase B</fullName>
        <shortName>PPIase B</shortName>
        <ecNumber>5.2.1.8</ecNumber>
    </recommendedName>
    <alternativeName>
        <fullName>Rotamase B</fullName>
    </alternativeName>
</protein>
<reference key="1">
    <citation type="journal article" date="2002" name="J. Bacteriol.">
        <title>Whole-genome comparison of Mycobacterium tuberculosis clinical and laboratory strains.</title>
        <authorList>
            <person name="Fleischmann R.D."/>
            <person name="Alland D."/>
            <person name="Eisen J.A."/>
            <person name="Carpenter L."/>
            <person name="White O."/>
            <person name="Peterson J.D."/>
            <person name="DeBoy R.T."/>
            <person name="Dodson R.J."/>
            <person name="Gwinn M.L."/>
            <person name="Haft D.H."/>
            <person name="Hickey E.K."/>
            <person name="Kolonay J.F."/>
            <person name="Nelson W.C."/>
            <person name="Umayam L.A."/>
            <person name="Ermolaeva M.D."/>
            <person name="Salzberg S.L."/>
            <person name="Delcher A."/>
            <person name="Utterback T.R."/>
            <person name="Weidman J.F."/>
            <person name="Khouri H.M."/>
            <person name="Gill J."/>
            <person name="Mikula A."/>
            <person name="Bishai W."/>
            <person name="Jacobs W.R. Jr."/>
            <person name="Venter J.C."/>
            <person name="Fraser C.M."/>
        </authorList>
    </citation>
    <scope>NUCLEOTIDE SEQUENCE [LARGE SCALE GENOMIC DNA]</scope>
    <source>
        <strain>CDC 1551 / Oshkosh</strain>
    </source>
</reference>
<name>PPIB_MYCTO</name>
<dbReference type="EC" id="5.2.1.8"/>
<dbReference type="EMBL" id="AE000516">
    <property type="protein sequence ID" value="AAK46972.1"/>
    <property type="molecule type" value="Genomic_DNA"/>
</dbReference>
<dbReference type="PIR" id="E70725">
    <property type="entry name" value="E70725"/>
</dbReference>
<dbReference type="SMR" id="P9WHW0"/>
<dbReference type="KEGG" id="mtc:MT2659"/>
<dbReference type="PATRIC" id="fig|83331.31.peg.2866"/>
<dbReference type="HOGENOM" id="CLU_012062_8_0_11"/>
<dbReference type="Proteomes" id="UP000001020">
    <property type="component" value="Chromosome"/>
</dbReference>
<dbReference type="GO" id="GO:0003755">
    <property type="term" value="F:peptidyl-prolyl cis-trans isomerase activity"/>
    <property type="evidence" value="ECO:0007669"/>
    <property type="project" value="UniProtKB-KW"/>
</dbReference>
<dbReference type="CDD" id="cd00317">
    <property type="entry name" value="cyclophilin"/>
    <property type="match status" value="1"/>
</dbReference>
<dbReference type="FunFam" id="2.40.100.10:FF:000060">
    <property type="entry name" value="Probable peptidyl-prolyl cis-trans isomerase B"/>
    <property type="match status" value="1"/>
</dbReference>
<dbReference type="Gene3D" id="2.40.100.10">
    <property type="entry name" value="Cyclophilin-like"/>
    <property type="match status" value="1"/>
</dbReference>
<dbReference type="InterPro" id="IPR029000">
    <property type="entry name" value="Cyclophilin-like_dom_sf"/>
</dbReference>
<dbReference type="InterPro" id="IPR002130">
    <property type="entry name" value="Cyclophilin-type_PPIase_dom"/>
</dbReference>
<dbReference type="InterPro" id="IPR044666">
    <property type="entry name" value="Cyclophilin_A-like"/>
</dbReference>
<dbReference type="PANTHER" id="PTHR45625:SF3">
    <property type="entry name" value="PEPTIDYL-PROLYL CIS-TRANS ISOMERASE B-RELATED"/>
    <property type="match status" value="1"/>
</dbReference>
<dbReference type="PANTHER" id="PTHR45625">
    <property type="entry name" value="PEPTIDYL-PROLYL CIS-TRANS ISOMERASE-RELATED"/>
    <property type="match status" value="1"/>
</dbReference>
<dbReference type="Pfam" id="PF00160">
    <property type="entry name" value="Pro_isomerase"/>
    <property type="match status" value="1"/>
</dbReference>
<dbReference type="PRINTS" id="PR00153">
    <property type="entry name" value="CSAPPISMRASE"/>
</dbReference>
<dbReference type="SUPFAM" id="SSF50891">
    <property type="entry name" value="Cyclophilin-like"/>
    <property type="match status" value="1"/>
</dbReference>
<dbReference type="PROSITE" id="PS50072">
    <property type="entry name" value="CSA_PPIASE_2"/>
    <property type="match status" value="1"/>
</dbReference>
<comment type="function">
    <text evidence="1">PPIases accelerate the folding of proteins. It catalyzes the cis-trans isomerization of proline imidic peptide bonds in oligopeptides (By similarity).</text>
</comment>
<comment type="catalytic activity">
    <reaction>
        <text>[protein]-peptidylproline (omega=180) = [protein]-peptidylproline (omega=0)</text>
        <dbReference type="Rhea" id="RHEA:16237"/>
        <dbReference type="Rhea" id="RHEA-COMP:10747"/>
        <dbReference type="Rhea" id="RHEA-COMP:10748"/>
        <dbReference type="ChEBI" id="CHEBI:83833"/>
        <dbReference type="ChEBI" id="CHEBI:83834"/>
        <dbReference type="EC" id="5.2.1.8"/>
    </reaction>
</comment>
<comment type="similarity">
    <text evidence="4">Belongs to the cyclophilin-type PPIase family.</text>
</comment>
<gene>
    <name type="primary">ppiB</name>
    <name type="synonym">ppi</name>
    <name type="ordered locus">MT2659</name>
</gene>
<keyword id="KW-0413">Isomerase</keyword>
<keyword id="KW-1185">Reference proteome</keyword>
<keyword id="KW-0697">Rotamase</keyword>
<evidence type="ECO:0000250" key="1"/>
<evidence type="ECO:0000255" key="2">
    <source>
        <dbReference type="PROSITE-ProRule" id="PRU00156"/>
    </source>
</evidence>
<evidence type="ECO:0000256" key="3">
    <source>
        <dbReference type="SAM" id="MobiDB-lite"/>
    </source>
</evidence>
<evidence type="ECO:0000305" key="4"/>
<proteinExistence type="inferred from homology"/>
<sequence length="308" mass="32371">MGHLTPVAAPRLACAFVPTNAQRRATAKRKLERQLERRAKQAKRRRILTIVGGSLAAVAVIVAVVVTVVVNKDDHQSTTSATPTDSASTSPPQAATAPPLPPFKPSANLGANCQYPPSPDKAVKPVKLPRTGKVPTDPAQVSVSMVTNQGNIGLMLANNESPCTVNSFVSLAQQGFFKGTTCHRLTTSPMLAVLQCGDPKGDGTGGPGYQFANEYPTDQYSANDPKLNEPVIYPRGTLAMANAGPNTNSSQFFMVYRDSKLPPQYTVFGTIQADGLTTLDKIAKAGVAGGGEDGKPATEVTITSVLLD</sequence>
<organism>
    <name type="scientific">Mycobacterium tuberculosis (strain CDC 1551 / Oshkosh)</name>
    <dbReference type="NCBI Taxonomy" id="83331"/>
    <lineage>
        <taxon>Bacteria</taxon>
        <taxon>Bacillati</taxon>
        <taxon>Actinomycetota</taxon>
        <taxon>Actinomycetes</taxon>
        <taxon>Mycobacteriales</taxon>
        <taxon>Mycobacteriaceae</taxon>
        <taxon>Mycobacterium</taxon>
        <taxon>Mycobacterium tuberculosis complex</taxon>
    </lineage>
</organism>